<dbReference type="EMBL" id="EF067921">
    <property type="protein sequence ID" value="ABK20747.1"/>
    <property type="molecule type" value="Genomic_DNA"/>
</dbReference>
<dbReference type="RefSeq" id="YP_874524.1">
    <property type="nucleotide sequence ID" value="NC_008589.1"/>
</dbReference>
<dbReference type="SMR" id="A0T0R2"/>
<dbReference type="STRING" id="35128.A0T0R2"/>
<dbReference type="PaxDb" id="35128-Thapsdraft989"/>
<dbReference type="GeneID" id="4524730"/>
<dbReference type="eggNOG" id="ENOG502R9BJ">
    <property type="taxonomic scope" value="Eukaryota"/>
</dbReference>
<dbReference type="InParanoid" id="A0T0R2"/>
<dbReference type="GO" id="GO:0009507">
    <property type="term" value="C:chloroplast"/>
    <property type="evidence" value="ECO:0007669"/>
    <property type="project" value="UniProtKB-SubCell"/>
</dbReference>
<dbReference type="GO" id="GO:0015935">
    <property type="term" value="C:small ribosomal subunit"/>
    <property type="evidence" value="ECO:0000318"/>
    <property type="project" value="GO_Central"/>
</dbReference>
<dbReference type="GO" id="GO:0070181">
    <property type="term" value="F:small ribosomal subunit rRNA binding"/>
    <property type="evidence" value="ECO:0000318"/>
    <property type="project" value="GO_Central"/>
</dbReference>
<dbReference type="GO" id="GO:0003735">
    <property type="term" value="F:structural constituent of ribosome"/>
    <property type="evidence" value="ECO:0007669"/>
    <property type="project" value="InterPro"/>
</dbReference>
<dbReference type="GO" id="GO:0006412">
    <property type="term" value="P:translation"/>
    <property type="evidence" value="ECO:0007669"/>
    <property type="project" value="UniProtKB-UniRule"/>
</dbReference>
<dbReference type="FunFam" id="1.20.58.110:FF:000001">
    <property type="entry name" value="30S ribosomal protein S20"/>
    <property type="match status" value="1"/>
</dbReference>
<dbReference type="Gene3D" id="1.20.58.110">
    <property type="entry name" value="Ribosomal protein S20"/>
    <property type="match status" value="1"/>
</dbReference>
<dbReference type="HAMAP" id="MF_00500">
    <property type="entry name" value="Ribosomal_bS20"/>
    <property type="match status" value="1"/>
</dbReference>
<dbReference type="InterPro" id="IPR002583">
    <property type="entry name" value="Ribosomal_bS20"/>
</dbReference>
<dbReference type="InterPro" id="IPR036510">
    <property type="entry name" value="Ribosomal_bS20_sf"/>
</dbReference>
<dbReference type="NCBIfam" id="TIGR00029">
    <property type="entry name" value="S20"/>
    <property type="match status" value="1"/>
</dbReference>
<dbReference type="PANTHER" id="PTHR33398">
    <property type="entry name" value="30S RIBOSOMAL PROTEIN S20"/>
    <property type="match status" value="1"/>
</dbReference>
<dbReference type="PANTHER" id="PTHR33398:SF1">
    <property type="entry name" value="SMALL RIBOSOMAL SUBUNIT PROTEIN BS20C"/>
    <property type="match status" value="1"/>
</dbReference>
<dbReference type="Pfam" id="PF01649">
    <property type="entry name" value="Ribosomal_S20p"/>
    <property type="match status" value="1"/>
</dbReference>
<dbReference type="SUPFAM" id="SSF46992">
    <property type="entry name" value="Ribosomal protein S20"/>
    <property type="match status" value="1"/>
</dbReference>
<protein>
    <recommendedName>
        <fullName evidence="1">Small ribosomal subunit protein bS20c</fullName>
    </recommendedName>
    <alternativeName>
        <fullName evidence="2">30S ribosomal protein S20, chloroplastic</fullName>
    </alternativeName>
</protein>
<proteinExistence type="inferred from homology"/>
<organism>
    <name type="scientific">Thalassiosira pseudonana</name>
    <name type="common">Marine diatom</name>
    <name type="synonym">Cyclotella nana</name>
    <dbReference type="NCBI Taxonomy" id="35128"/>
    <lineage>
        <taxon>Eukaryota</taxon>
        <taxon>Sar</taxon>
        <taxon>Stramenopiles</taxon>
        <taxon>Ochrophyta</taxon>
        <taxon>Bacillariophyta</taxon>
        <taxon>Coscinodiscophyceae</taxon>
        <taxon>Thalassiosirophycidae</taxon>
        <taxon>Thalassiosirales</taxon>
        <taxon>Thalassiosiraceae</taxon>
        <taxon>Thalassiosira</taxon>
    </lineage>
</organism>
<accession>A0T0R2</accession>
<name>RR20_THAPS</name>
<evidence type="ECO:0000255" key="1">
    <source>
        <dbReference type="HAMAP-Rule" id="MF_00500"/>
    </source>
</evidence>
<evidence type="ECO:0000305" key="2"/>
<reference key="1">
    <citation type="journal article" date="2007" name="Mol. Genet. Genomics">
        <title>Chloroplast genomes of the diatoms Phaeodactylum tricornutum and Thalassiosira pseudonana: comparison with other plastid genomes of the red lineage.</title>
        <authorList>
            <person name="Oudot-Le Secq M.-P."/>
            <person name="Grimwood J."/>
            <person name="Shapiro H."/>
            <person name="Armbrust E.V."/>
            <person name="Bowler C."/>
            <person name="Green B.R."/>
        </authorList>
    </citation>
    <scope>NUCLEOTIDE SEQUENCE [LARGE SCALE GENOMIC DNA]</scope>
    <source>
        <strain>CCMP1335 / NEPCC58 / CCAP 1085/12</strain>
    </source>
</reference>
<sequence>MANNKSAKKRILITKRNNLQNRFYKSSVRTLTKRFLSDLETYKISQSNTDKDKLQNGLSSIYSLIDKGYKKNVYHKNTAARKKSKLAALLKAA</sequence>
<keyword id="KW-0150">Chloroplast</keyword>
<keyword id="KW-0934">Plastid</keyword>
<keyword id="KW-0687">Ribonucleoprotein</keyword>
<keyword id="KW-0689">Ribosomal protein</keyword>
<keyword id="KW-0694">RNA-binding</keyword>
<keyword id="KW-0699">rRNA-binding</keyword>
<comment type="function">
    <text evidence="1">Binds directly to 16S ribosomal RNA.</text>
</comment>
<comment type="subcellular location">
    <subcellularLocation>
        <location>Plastid</location>
        <location>Chloroplast</location>
    </subcellularLocation>
</comment>
<comment type="similarity">
    <text evidence="1">Belongs to the bacterial ribosomal protein bS20 family.</text>
</comment>
<geneLocation type="chloroplast"/>
<gene>
    <name evidence="1" type="primary">rps20</name>
</gene>
<feature type="chain" id="PRO_0000276936" description="Small ribosomal subunit protein bS20c">
    <location>
        <begin position="1"/>
        <end position="93"/>
    </location>
</feature>